<accession>Q924K2</accession>
<evidence type="ECO:0000250" key="1">
    <source>
        <dbReference type="UniProtKB" id="P54731"/>
    </source>
</evidence>
<evidence type="ECO:0000250" key="2">
    <source>
        <dbReference type="UniProtKB" id="Q9UNN5"/>
    </source>
</evidence>
<evidence type="ECO:0000255" key="3">
    <source>
        <dbReference type="PROSITE-ProRule" id="PRU00215"/>
    </source>
</evidence>
<evidence type="ECO:0000256" key="4">
    <source>
        <dbReference type="SAM" id="MobiDB-lite"/>
    </source>
</evidence>
<evidence type="ECO:0007744" key="5">
    <source>
    </source>
</evidence>
<protein>
    <recommendedName>
        <fullName>FAS-associated factor 1</fullName>
    </recommendedName>
</protein>
<organism>
    <name type="scientific">Rattus norvegicus</name>
    <name type="common">Rat</name>
    <dbReference type="NCBI Taxonomy" id="10116"/>
    <lineage>
        <taxon>Eukaryota</taxon>
        <taxon>Metazoa</taxon>
        <taxon>Chordata</taxon>
        <taxon>Craniata</taxon>
        <taxon>Vertebrata</taxon>
        <taxon>Euteleostomi</taxon>
        <taxon>Mammalia</taxon>
        <taxon>Eutheria</taxon>
        <taxon>Euarchontoglires</taxon>
        <taxon>Glires</taxon>
        <taxon>Rodentia</taxon>
        <taxon>Myomorpha</taxon>
        <taxon>Muroidea</taxon>
        <taxon>Muridae</taxon>
        <taxon>Murinae</taxon>
        <taxon>Rattus</taxon>
    </lineage>
</organism>
<name>FAF1_RAT</name>
<proteinExistence type="evidence at protein level"/>
<gene>
    <name type="primary">Faf1</name>
</gene>
<comment type="function">
    <text evidence="1 2">Ubiquitin-binding protein. Required for the progression of DNA replication forks by targeting DNA replication licensing factor CDT1 for degradation. Potentiates but cannot initiate FAS-induced apoptosis.</text>
</comment>
<comment type="subunit">
    <text evidence="2">Interacts with CDT1 and ATPase VCP/p97. Interacts (via UBA domain) with FAS (via death domain). Interacts (via UBA domain) with NLRP12 (via DAPIN/PYRIN domain).</text>
</comment>
<comment type="subcellular location">
    <subcellularLocation>
        <location evidence="2">Nucleus</location>
    </subcellularLocation>
</comment>
<comment type="tissue specificity">
    <text>Central nervous system.</text>
</comment>
<dbReference type="EMBL" id="AF293459">
    <property type="protein sequence ID" value="AAK94676.1"/>
    <property type="molecule type" value="mRNA"/>
</dbReference>
<dbReference type="RefSeq" id="NP_569090.1">
    <property type="nucleotide sequence ID" value="NM_130406.1"/>
</dbReference>
<dbReference type="BMRB" id="Q924K2"/>
<dbReference type="SMR" id="Q924K2"/>
<dbReference type="BioGRID" id="250821">
    <property type="interactions" value="2"/>
</dbReference>
<dbReference type="FunCoup" id="Q924K2">
    <property type="interactions" value="3788"/>
</dbReference>
<dbReference type="STRING" id="10116.ENSRNOP00000011765"/>
<dbReference type="iPTMnet" id="Q924K2"/>
<dbReference type="PhosphoSitePlus" id="Q924K2"/>
<dbReference type="jPOST" id="Q924K2"/>
<dbReference type="PaxDb" id="10116-ENSRNOP00000011765"/>
<dbReference type="GeneID" id="140657"/>
<dbReference type="KEGG" id="rno:140657"/>
<dbReference type="UCSC" id="RGD:70987">
    <property type="organism name" value="rat"/>
</dbReference>
<dbReference type="AGR" id="RGD:70987"/>
<dbReference type="CTD" id="11124"/>
<dbReference type="RGD" id="70987">
    <property type="gene designation" value="Faf1"/>
</dbReference>
<dbReference type="eggNOG" id="KOG1363">
    <property type="taxonomic scope" value="Eukaryota"/>
</dbReference>
<dbReference type="InParanoid" id="Q924K2"/>
<dbReference type="PhylomeDB" id="Q924K2"/>
<dbReference type="PRO" id="PR:Q924K2"/>
<dbReference type="Proteomes" id="UP000002494">
    <property type="component" value="Unplaced"/>
</dbReference>
<dbReference type="GO" id="GO:0005737">
    <property type="term" value="C:cytoplasm"/>
    <property type="evidence" value="ECO:0000266"/>
    <property type="project" value="RGD"/>
</dbReference>
<dbReference type="GO" id="GO:0005829">
    <property type="term" value="C:cytosol"/>
    <property type="evidence" value="ECO:0000250"/>
    <property type="project" value="UniProtKB"/>
</dbReference>
<dbReference type="GO" id="GO:0005783">
    <property type="term" value="C:endoplasmic reticulum"/>
    <property type="evidence" value="ECO:0000318"/>
    <property type="project" value="GO_Central"/>
</dbReference>
<dbReference type="GO" id="GO:0005635">
    <property type="term" value="C:nuclear envelope"/>
    <property type="evidence" value="ECO:0000266"/>
    <property type="project" value="RGD"/>
</dbReference>
<dbReference type="GO" id="GO:0005634">
    <property type="term" value="C:nucleus"/>
    <property type="evidence" value="ECO:0000250"/>
    <property type="project" value="UniProtKB"/>
</dbReference>
<dbReference type="GO" id="GO:1990917">
    <property type="term" value="C:ooplasm"/>
    <property type="evidence" value="ECO:0000266"/>
    <property type="project" value="RGD"/>
</dbReference>
<dbReference type="GO" id="GO:0048471">
    <property type="term" value="C:perinuclear region of cytoplasm"/>
    <property type="evidence" value="ECO:0000250"/>
    <property type="project" value="UniProtKB"/>
</dbReference>
<dbReference type="GO" id="GO:0034098">
    <property type="term" value="C:VCP-NPL4-UFD1 AAA ATPase complex"/>
    <property type="evidence" value="ECO:0000266"/>
    <property type="project" value="RGD"/>
</dbReference>
<dbReference type="GO" id="GO:0031072">
    <property type="term" value="F:heat shock protein binding"/>
    <property type="evidence" value="ECO:0000250"/>
    <property type="project" value="UniProtKB"/>
</dbReference>
<dbReference type="GO" id="GO:0051059">
    <property type="term" value="F:NF-kappaB binding"/>
    <property type="evidence" value="ECO:0000266"/>
    <property type="project" value="RGD"/>
</dbReference>
<dbReference type="GO" id="GO:0019904">
    <property type="term" value="F:protein domain specific binding"/>
    <property type="evidence" value="ECO:0000266"/>
    <property type="project" value="RGD"/>
</dbReference>
<dbReference type="GO" id="GO:0019901">
    <property type="term" value="F:protein kinase binding"/>
    <property type="evidence" value="ECO:0000250"/>
    <property type="project" value="UniProtKB"/>
</dbReference>
<dbReference type="GO" id="GO:0043130">
    <property type="term" value="F:ubiquitin binding"/>
    <property type="evidence" value="ECO:0000266"/>
    <property type="project" value="RGD"/>
</dbReference>
<dbReference type="GO" id="GO:0031625">
    <property type="term" value="F:ubiquitin protein ligase binding"/>
    <property type="evidence" value="ECO:0000266"/>
    <property type="project" value="RGD"/>
</dbReference>
<dbReference type="GO" id="GO:0006915">
    <property type="term" value="P:apoptotic process"/>
    <property type="evidence" value="ECO:0007669"/>
    <property type="project" value="UniProtKB-KW"/>
</dbReference>
<dbReference type="GO" id="GO:0036503">
    <property type="term" value="P:ERAD pathway"/>
    <property type="evidence" value="ECO:0000318"/>
    <property type="project" value="GO_Central"/>
</dbReference>
<dbReference type="GO" id="GO:0036337">
    <property type="term" value="P:Fas signaling pathway"/>
    <property type="evidence" value="ECO:0000250"/>
    <property type="project" value="UniProtKB"/>
</dbReference>
<dbReference type="GO" id="GO:0043124">
    <property type="term" value="P:negative regulation of canonical NF-kappaB signal transduction"/>
    <property type="evidence" value="ECO:0000250"/>
    <property type="project" value="UniProtKB"/>
</dbReference>
<dbReference type="GO" id="GO:0045740">
    <property type="term" value="P:positive regulation of DNA replication"/>
    <property type="evidence" value="ECO:0000266"/>
    <property type="project" value="RGD"/>
</dbReference>
<dbReference type="GO" id="GO:1902043">
    <property type="term" value="P:positive regulation of extrinsic apoptotic signaling pathway via death domain receptors"/>
    <property type="evidence" value="ECO:0000266"/>
    <property type="project" value="RGD"/>
</dbReference>
<dbReference type="GO" id="GO:0045732">
    <property type="term" value="P:positive regulation of protein catabolic process"/>
    <property type="evidence" value="ECO:0000266"/>
    <property type="project" value="RGD"/>
</dbReference>
<dbReference type="GO" id="GO:0031334">
    <property type="term" value="P:positive regulation of protein-containing complex assembly"/>
    <property type="evidence" value="ECO:0000266"/>
    <property type="project" value="RGD"/>
</dbReference>
<dbReference type="GO" id="GO:0030155">
    <property type="term" value="P:regulation of cell adhesion"/>
    <property type="evidence" value="ECO:0000266"/>
    <property type="project" value="RGD"/>
</dbReference>
<dbReference type="GO" id="GO:0042176">
    <property type="term" value="P:regulation of protein catabolic process"/>
    <property type="evidence" value="ECO:0000250"/>
    <property type="project" value="UniProtKB"/>
</dbReference>
<dbReference type="CDD" id="cd02990">
    <property type="entry name" value="UAS_FAF1"/>
    <property type="match status" value="1"/>
</dbReference>
<dbReference type="CDD" id="cd14413">
    <property type="entry name" value="UBA_FAF1"/>
    <property type="match status" value="1"/>
</dbReference>
<dbReference type="CDD" id="cd17129">
    <property type="entry name" value="Ubl1_FAF1"/>
    <property type="match status" value="1"/>
</dbReference>
<dbReference type="CDD" id="cd17056">
    <property type="entry name" value="Ubl_FAF1"/>
    <property type="match status" value="1"/>
</dbReference>
<dbReference type="CDD" id="cd01771">
    <property type="entry name" value="UBX_UBXN3A"/>
    <property type="match status" value="1"/>
</dbReference>
<dbReference type="FunFam" id="3.10.20.90:FF:000089">
    <property type="entry name" value="Fas associated factor 1"/>
    <property type="match status" value="1"/>
</dbReference>
<dbReference type="FunFam" id="3.10.20.90:FF:000122">
    <property type="entry name" value="Fas associated factor 1"/>
    <property type="match status" value="1"/>
</dbReference>
<dbReference type="FunFam" id="3.10.20.90:FF:000137">
    <property type="entry name" value="Fas associated factor 1"/>
    <property type="match status" value="1"/>
</dbReference>
<dbReference type="FunFam" id="3.40.30.10:FF:000061">
    <property type="entry name" value="Fas associated factor 1"/>
    <property type="match status" value="1"/>
</dbReference>
<dbReference type="FunFam" id="1.10.8.10:FF:000045">
    <property type="entry name" value="Putative FAS-associated factor 1"/>
    <property type="match status" value="1"/>
</dbReference>
<dbReference type="Gene3D" id="1.10.8.10">
    <property type="entry name" value="DNA helicase RuvA subunit, C-terminal domain"/>
    <property type="match status" value="1"/>
</dbReference>
<dbReference type="Gene3D" id="3.40.30.10">
    <property type="entry name" value="Glutaredoxin"/>
    <property type="match status" value="1"/>
</dbReference>
<dbReference type="Gene3D" id="3.10.20.90">
    <property type="entry name" value="Phosphatidylinositol 3-kinase Catalytic Subunit, Chain A, domain 1"/>
    <property type="match status" value="3"/>
</dbReference>
<dbReference type="InterPro" id="IPR033043">
    <property type="entry name" value="FAF1-like_UBX"/>
</dbReference>
<dbReference type="InterPro" id="IPR049483">
    <property type="entry name" value="FAF1_2-like_UAS"/>
</dbReference>
<dbReference type="InterPro" id="IPR044541">
    <property type="entry name" value="FAF1_UBA"/>
</dbReference>
<dbReference type="InterPro" id="IPR036249">
    <property type="entry name" value="Thioredoxin-like_sf"/>
</dbReference>
<dbReference type="InterPro" id="IPR006577">
    <property type="entry name" value="UAS"/>
</dbReference>
<dbReference type="InterPro" id="IPR029071">
    <property type="entry name" value="Ubiquitin-like_domsf"/>
</dbReference>
<dbReference type="InterPro" id="IPR001012">
    <property type="entry name" value="UBX_dom"/>
</dbReference>
<dbReference type="InterPro" id="IPR050730">
    <property type="entry name" value="UBX_domain-protein"/>
</dbReference>
<dbReference type="PANTHER" id="PTHR23322:SF96">
    <property type="entry name" value="FAS-ASSOCIATED FACTOR 1"/>
    <property type="match status" value="1"/>
</dbReference>
<dbReference type="PANTHER" id="PTHR23322">
    <property type="entry name" value="FAS-ASSOCIATED PROTEIN"/>
    <property type="match status" value="1"/>
</dbReference>
<dbReference type="Pfam" id="PF21021">
    <property type="entry name" value="FAF1"/>
    <property type="match status" value="1"/>
</dbReference>
<dbReference type="Pfam" id="PF14555">
    <property type="entry name" value="UBA_4"/>
    <property type="match status" value="1"/>
</dbReference>
<dbReference type="Pfam" id="PF00789">
    <property type="entry name" value="UBX"/>
    <property type="match status" value="1"/>
</dbReference>
<dbReference type="SMART" id="SM00594">
    <property type="entry name" value="UAS"/>
    <property type="match status" value="1"/>
</dbReference>
<dbReference type="SMART" id="SM00166">
    <property type="entry name" value="UBX"/>
    <property type="match status" value="1"/>
</dbReference>
<dbReference type="SUPFAM" id="SSF52833">
    <property type="entry name" value="Thioredoxin-like"/>
    <property type="match status" value="1"/>
</dbReference>
<dbReference type="SUPFAM" id="SSF54236">
    <property type="entry name" value="Ubiquitin-like"/>
    <property type="match status" value="3"/>
</dbReference>
<dbReference type="PROSITE" id="PS50033">
    <property type="entry name" value="UBX"/>
    <property type="match status" value="1"/>
</dbReference>
<reference key="1">
    <citation type="submission" date="2000-08" db="EMBL/GenBank/DDBJ databases">
        <title>Isolation and characterization of a cDNA clone encoding Fas-associated factor 1 (FAF1) in rat central nervous system.</title>
        <authorList>
            <person name="Shin S.W."/>
            <person name="Lee M.Y."/>
            <person name="Choe B.K."/>
            <person name="Oh Y.J."/>
            <person name="Lee Y.B."/>
            <person name="Markelonis G.J."/>
            <person name="Oh T.H."/>
        </authorList>
    </citation>
    <scope>NUCLEOTIDE SEQUENCE [MRNA]</scope>
    <source>
        <strain>Sprague-Dawley</strain>
    </source>
</reference>
<reference key="2">
    <citation type="journal article" date="2012" name="Nat. Commun.">
        <title>Quantitative maps of protein phosphorylation sites across 14 different rat organs and tissues.</title>
        <authorList>
            <person name="Lundby A."/>
            <person name="Secher A."/>
            <person name="Lage K."/>
            <person name="Nordsborg N.B."/>
            <person name="Dmytriyev A."/>
            <person name="Lundby C."/>
            <person name="Olsen J.V."/>
        </authorList>
    </citation>
    <scope>PHOSPHORYLATION [LARGE SCALE ANALYSIS] AT SER-319 AND SER-581</scope>
    <scope>IDENTIFICATION BY MASS SPECTROMETRY [LARGE SCALE ANALYSIS]</scope>
</reference>
<sequence length="649" mass="73745">MASNMDREMILADFQACTGIENIDEAITLLEQNNWDLVAAINGVIPQENGILQSDFGGETMPGPTFDPASPPAPAPAPSSSAFRPVMPSRQIVERQPRMLDFRVEYRDRNVDVVLEDSCTVGEIKQILENELQIPVPKMLLKGWKTGDVEDSTVLKSLHLPKNNSLYVLTPDLPPPSSSSHAGALQESLNQNFMLIITHREVQREYNLNFSGSSTVQEVKRNVYDLTSIPVRHQLWEGWPASATDDSMCLAESGLSYPCHRLTVGRRTSPVQTREQSEEQSTVVHMVSDSDGDDFEDASEFGVVDGEVFGMASSTMRKSPMMPENAENEGDALLQFTAEFSSRYGDCHPVFFIGSLEAAFQEAFYVKARDRKLLAIYLHHDESVLTNVFCSQMLCAESIVSYLSQNFITWAWDLTKDANRARFLTMCNRHFGSVIAQTIRTQKTDQFPLFLIIMGKRSSNEVLNVIQGNTTVDELMMRLMAAMEIFSAQQQEDIKDEDEREARENVKREQDEAYRLSLEADRAKREAHEREMAEQFRLEQIRKEQEEEREAIRLSLEQALPPEPEEENAEPVSKLRIRTPSGEFLERRFLASNKLQIVFDFVASKGFPWDEFKLLSTFPRRDVTQLDPNKSLLEVNLFPQETLFLLAKE</sequence>
<feature type="chain" id="PRO_0000211040" description="FAS-associated factor 1">
    <location>
        <begin position="1"/>
        <end position="649"/>
    </location>
</feature>
<feature type="domain" description="UBA" evidence="2">
    <location>
        <begin position="1"/>
        <end position="57"/>
    </location>
</feature>
<feature type="domain" description="UBX" evidence="3">
    <location>
        <begin position="568"/>
        <end position="645"/>
    </location>
</feature>
<feature type="region of interest" description="Disordered" evidence="4">
    <location>
        <begin position="55"/>
        <end position="84"/>
    </location>
</feature>
<feature type="modified residue" description="Phosphoserine" evidence="5">
    <location>
        <position position="319"/>
    </location>
</feature>
<feature type="modified residue" description="Phosphothreonine" evidence="2">
    <location>
        <position position="579"/>
    </location>
</feature>
<feature type="modified residue" description="Phosphoserine" evidence="5">
    <location>
        <position position="581"/>
    </location>
</feature>
<keyword id="KW-0053">Apoptosis</keyword>
<keyword id="KW-0539">Nucleus</keyword>
<keyword id="KW-0597">Phosphoprotein</keyword>
<keyword id="KW-1185">Reference proteome</keyword>